<reference key="1">
    <citation type="journal article" date="2005" name="Jpn. Agric. Res. Q.">
        <title>Genome sequence of Xanthomonas oryzae pv. oryzae suggests contribution of large numbers of effector genes and insertion sequences to its race diversity.</title>
        <authorList>
            <person name="Ochiai H."/>
            <person name="Inoue Y."/>
            <person name="Takeya M."/>
            <person name="Sasaki A."/>
            <person name="Kaku H."/>
        </authorList>
    </citation>
    <scope>NUCLEOTIDE SEQUENCE [LARGE SCALE GENOMIC DNA]</scope>
    <source>
        <strain>MAFF 311018</strain>
    </source>
</reference>
<protein>
    <recommendedName>
        <fullName evidence="1">Orotidine 5'-phosphate decarboxylase</fullName>
        <ecNumber evidence="1">4.1.1.23</ecNumber>
    </recommendedName>
    <alternativeName>
        <fullName evidence="1">OMP decarboxylase</fullName>
        <shortName evidence="1">OMPDCase</shortName>
        <shortName evidence="1">OMPdecase</shortName>
    </alternativeName>
</protein>
<accession>Q2P8Z6</accession>
<dbReference type="EC" id="4.1.1.23" evidence="1"/>
<dbReference type="EMBL" id="AP008229">
    <property type="protein sequence ID" value="BAE66981.1"/>
    <property type="molecule type" value="Genomic_DNA"/>
</dbReference>
<dbReference type="RefSeq" id="WP_011257215.1">
    <property type="nucleotide sequence ID" value="NC_007705.1"/>
</dbReference>
<dbReference type="SMR" id="Q2P8Z6"/>
<dbReference type="KEGG" id="xom:XOO0226"/>
<dbReference type="HOGENOM" id="CLU_067069_1_0_6"/>
<dbReference type="UniPathway" id="UPA00070">
    <property type="reaction ID" value="UER00120"/>
</dbReference>
<dbReference type="GO" id="GO:0005829">
    <property type="term" value="C:cytosol"/>
    <property type="evidence" value="ECO:0007669"/>
    <property type="project" value="TreeGrafter"/>
</dbReference>
<dbReference type="GO" id="GO:0004590">
    <property type="term" value="F:orotidine-5'-phosphate decarboxylase activity"/>
    <property type="evidence" value="ECO:0007669"/>
    <property type="project" value="UniProtKB-UniRule"/>
</dbReference>
<dbReference type="GO" id="GO:0006207">
    <property type="term" value="P:'de novo' pyrimidine nucleobase biosynthetic process"/>
    <property type="evidence" value="ECO:0007669"/>
    <property type="project" value="InterPro"/>
</dbReference>
<dbReference type="GO" id="GO:0044205">
    <property type="term" value="P:'de novo' UMP biosynthetic process"/>
    <property type="evidence" value="ECO:0007669"/>
    <property type="project" value="UniProtKB-UniRule"/>
</dbReference>
<dbReference type="CDD" id="cd04725">
    <property type="entry name" value="OMP_decarboxylase_like"/>
    <property type="match status" value="1"/>
</dbReference>
<dbReference type="FunFam" id="3.20.20.70:FF:000235">
    <property type="entry name" value="Orotidine 5'-phosphate decarboxylase"/>
    <property type="match status" value="1"/>
</dbReference>
<dbReference type="Gene3D" id="3.20.20.70">
    <property type="entry name" value="Aldolase class I"/>
    <property type="match status" value="1"/>
</dbReference>
<dbReference type="HAMAP" id="MF_01200_B">
    <property type="entry name" value="OMPdecase_type1_B"/>
    <property type="match status" value="1"/>
</dbReference>
<dbReference type="InterPro" id="IPR013785">
    <property type="entry name" value="Aldolase_TIM"/>
</dbReference>
<dbReference type="InterPro" id="IPR014732">
    <property type="entry name" value="OMPdecase"/>
</dbReference>
<dbReference type="InterPro" id="IPR018089">
    <property type="entry name" value="OMPdecase_AS"/>
</dbReference>
<dbReference type="InterPro" id="IPR047596">
    <property type="entry name" value="OMPdecase_bac"/>
</dbReference>
<dbReference type="InterPro" id="IPR001754">
    <property type="entry name" value="OMPdeCOase_dom"/>
</dbReference>
<dbReference type="InterPro" id="IPR011060">
    <property type="entry name" value="RibuloseP-bd_barrel"/>
</dbReference>
<dbReference type="NCBIfam" id="NF001273">
    <property type="entry name" value="PRK00230.1"/>
    <property type="match status" value="1"/>
</dbReference>
<dbReference type="NCBIfam" id="TIGR01740">
    <property type="entry name" value="pyrF"/>
    <property type="match status" value="1"/>
</dbReference>
<dbReference type="PANTHER" id="PTHR32119">
    <property type="entry name" value="OROTIDINE 5'-PHOSPHATE DECARBOXYLASE"/>
    <property type="match status" value="1"/>
</dbReference>
<dbReference type="PANTHER" id="PTHR32119:SF2">
    <property type="entry name" value="OROTIDINE 5'-PHOSPHATE DECARBOXYLASE"/>
    <property type="match status" value="1"/>
</dbReference>
<dbReference type="Pfam" id="PF00215">
    <property type="entry name" value="OMPdecase"/>
    <property type="match status" value="1"/>
</dbReference>
<dbReference type="SMART" id="SM00934">
    <property type="entry name" value="OMPdecase"/>
    <property type="match status" value="1"/>
</dbReference>
<dbReference type="SUPFAM" id="SSF51366">
    <property type="entry name" value="Ribulose-phoshate binding barrel"/>
    <property type="match status" value="1"/>
</dbReference>
<dbReference type="PROSITE" id="PS00156">
    <property type="entry name" value="OMPDECASE"/>
    <property type="match status" value="1"/>
</dbReference>
<name>PYRF_XANOM</name>
<proteinExistence type="inferred from homology"/>
<comment type="function">
    <text evidence="1">Catalyzes the decarboxylation of orotidine 5'-monophosphate (OMP) to uridine 5'-monophosphate (UMP).</text>
</comment>
<comment type="catalytic activity">
    <reaction evidence="1">
        <text>orotidine 5'-phosphate + H(+) = UMP + CO2</text>
        <dbReference type="Rhea" id="RHEA:11596"/>
        <dbReference type="ChEBI" id="CHEBI:15378"/>
        <dbReference type="ChEBI" id="CHEBI:16526"/>
        <dbReference type="ChEBI" id="CHEBI:57538"/>
        <dbReference type="ChEBI" id="CHEBI:57865"/>
        <dbReference type="EC" id="4.1.1.23"/>
    </reaction>
</comment>
<comment type="pathway">
    <text evidence="1">Pyrimidine metabolism; UMP biosynthesis via de novo pathway; UMP from orotate: step 2/2.</text>
</comment>
<comment type="subunit">
    <text evidence="1">Homodimer.</text>
</comment>
<comment type="similarity">
    <text evidence="1">Belongs to the OMP decarboxylase family. Type 1 subfamily.</text>
</comment>
<gene>
    <name evidence="1" type="primary">pyrF</name>
    <name type="ordered locus">XOO0226</name>
</gene>
<organism>
    <name type="scientific">Xanthomonas oryzae pv. oryzae (strain MAFF 311018)</name>
    <dbReference type="NCBI Taxonomy" id="342109"/>
    <lineage>
        <taxon>Bacteria</taxon>
        <taxon>Pseudomonadati</taxon>
        <taxon>Pseudomonadota</taxon>
        <taxon>Gammaproteobacteria</taxon>
        <taxon>Lysobacterales</taxon>
        <taxon>Lysobacteraceae</taxon>
        <taxon>Xanthomonas</taxon>
    </lineage>
</organism>
<sequence>MSRAPLPLAAHERLIFALDVPSHDEAIAWVDRLGDSVAFYKIGMELLASGEYFHVLDALAKRDKRVFVDLKFFDIPATVAGTIRRLAQWPVSYCTVHGWHAGMLQAAADANHGAMRLLAVTVLTSMGRPDLAAMGIDREPVDVVVERALAAEAAGIDGVIASGQEAGPIRRATGPAFSIVCPGIRPGGPVADDQQRIVGVAQAFTDGADAIVVGRPIRLAADPAAAAAAIQAEILAAVGQDRS</sequence>
<keyword id="KW-0210">Decarboxylase</keyword>
<keyword id="KW-0456">Lyase</keyword>
<keyword id="KW-0665">Pyrimidine biosynthesis</keyword>
<feature type="chain" id="PRO_0000241933" description="Orotidine 5'-phosphate decarboxylase">
    <location>
        <begin position="1"/>
        <end position="243"/>
    </location>
</feature>
<feature type="active site" description="Proton donor" evidence="1">
    <location>
        <position position="71"/>
    </location>
</feature>
<feature type="binding site" evidence="1">
    <location>
        <position position="19"/>
    </location>
    <ligand>
        <name>substrate</name>
    </ligand>
</feature>
<feature type="binding site" evidence="1">
    <location>
        <position position="41"/>
    </location>
    <ligand>
        <name>substrate</name>
    </ligand>
</feature>
<feature type="binding site" evidence="1">
    <location>
        <begin position="69"/>
        <end position="78"/>
    </location>
    <ligand>
        <name>substrate</name>
    </ligand>
</feature>
<feature type="binding site" evidence="1">
    <location>
        <position position="124"/>
    </location>
    <ligand>
        <name>substrate</name>
    </ligand>
</feature>
<feature type="binding site" evidence="1">
    <location>
        <position position="185"/>
    </location>
    <ligand>
        <name>substrate</name>
    </ligand>
</feature>
<feature type="binding site" evidence="1">
    <location>
        <position position="194"/>
    </location>
    <ligand>
        <name>substrate</name>
    </ligand>
</feature>
<feature type="binding site" evidence="1">
    <location>
        <position position="214"/>
    </location>
    <ligand>
        <name>substrate</name>
    </ligand>
</feature>
<feature type="binding site" evidence="1">
    <location>
        <position position="215"/>
    </location>
    <ligand>
        <name>substrate</name>
    </ligand>
</feature>
<evidence type="ECO:0000255" key="1">
    <source>
        <dbReference type="HAMAP-Rule" id="MF_01200"/>
    </source>
</evidence>